<accession>Q9FUJ1</accession>
<keyword id="KW-0002">3D-structure</keyword>
<keyword id="KW-0963">Cytoplasm</keyword>
<keyword id="KW-0274">FAD</keyword>
<keyword id="KW-0285">Flavoprotein</keyword>
<keyword id="KW-0560">Oxidoreductase</keyword>
<keyword id="KW-1185">Reference proteome</keyword>
<evidence type="ECO:0000250" key="1">
    <source>
        <dbReference type="UniProtKB" id="Q9T0N8"/>
    </source>
</evidence>
<evidence type="ECO:0000255" key="2">
    <source>
        <dbReference type="PROSITE-ProRule" id="PRU00718"/>
    </source>
</evidence>
<evidence type="ECO:0000269" key="3">
    <source>
    </source>
</evidence>
<evidence type="ECO:0000269" key="4">
    <source>
    </source>
</evidence>
<evidence type="ECO:0000269" key="5">
    <source>
    </source>
</evidence>
<evidence type="ECO:0000305" key="6"/>
<evidence type="ECO:0007744" key="7">
    <source>
        <dbReference type="PDB" id="2EXR"/>
    </source>
</evidence>
<evidence type="ECO:0007744" key="8">
    <source>
        <dbReference type="PDB" id="2Q4W"/>
    </source>
</evidence>
<evidence type="ECO:0007829" key="9">
    <source>
        <dbReference type="PDB" id="2EXR"/>
    </source>
</evidence>
<evidence type="ECO:0007829" key="10">
    <source>
        <dbReference type="PDB" id="2Q4W"/>
    </source>
</evidence>
<comment type="function">
    <text evidence="4">Catalyzes the oxidation of cytokinins, a family of N(6)-substituted adenine derivatives that are plant hormones, where the substituent is an isopentenyl group (PubMed:20825956). Catalyzes in vitro the oxidation of various types of cytokinin nucleotides that are known as direct products of cytokinin biosynthesis (PubMed:20825956).</text>
</comment>
<comment type="catalytic activity">
    <reaction evidence="4">
        <text>N(6)-dimethylallyladenine + A + H2O = 3-methyl-2-butenal + adenine + AH2</text>
        <dbReference type="Rhea" id="RHEA:13625"/>
        <dbReference type="ChEBI" id="CHEBI:13193"/>
        <dbReference type="ChEBI" id="CHEBI:15377"/>
        <dbReference type="ChEBI" id="CHEBI:15825"/>
        <dbReference type="ChEBI" id="CHEBI:16708"/>
        <dbReference type="ChEBI" id="CHEBI:17499"/>
        <dbReference type="ChEBI" id="CHEBI:17660"/>
        <dbReference type="EC" id="1.5.99.12"/>
    </reaction>
</comment>
<comment type="cofactor">
    <cofactor evidence="3">
        <name>FAD</name>
        <dbReference type="ChEBI" id="CHEBI:57692"/>
    </cofactor>
</comment>
<comment type="subcellular location">
    <subcellularLocation>
        <location evidence="5">Cytoplasm</location>
        <location evidence="5">Cytosol</location>
    </subcellularLocation>
</comment>
<comment type="tissue specificity">
    <text evidence="5">Expressed in the vasculature of roots, hypocotyls, cotyledons and leaves of young seedlings (PubMed:24528491). In flowers, expressed in the transmitting tissue of the gynoecium prior to pollination (PubMed:24528491). Expressed in the mature embryo sac with maximum activity in the egg cell and the synergids (PubMed:24528491).</text>
</comment>
<comment type="miscellaneous">
    <text evidence="5">Plants over-expressing CKX7 have reduced cytokinin content, and seedling primary root does not develop lateral roots (PubMed:24528491). Plants over-expressing CKX7 show reduced leaf size, plant height and number of flowers, and increased number of lateral branches (PubMed:24528491).</text>
</comment>
<comment type="similarity">
    <text evidence="6">Belongs to the oxygen-dependent FAD-linked oxidoreductase family.</text>
</comment>
<sequence length="524" mass="57976">MIAYIEPYFLENDAEAASAATAAGKSTDGVSESLNIQGEILCGGAAADIAGRDFGGMNCVKPLAVVRPVGPEDIAGAVKAALRSDKLTVAARGNGHSINGQAMAEGGLVVDMSTTAENHFEVGYLSGGDATAFVDVSGGALWEDVLKRCVSEYGLAPRSWTDYLGLTVGGTLSNAGVSGQAFRYGPQTSNVTELDVVTGNGDVVTCSEIENSELFFSVLGGLGQFGIITRARVLLQPAPDMVRWIRVVYTEFDEFTQDAEWLVSQKNESSFDYVEGFVFVNGADPVNGWPTVPLHPDHEFDPTRLPQSCGSVLYCLELGLHYRDSDSNSTIDKRVERLIGRLRFNEGLRFEVDLPYVDFLLRVKRSEEIAKENGTWETPHPWLNLFVSKRDIGDFNRTVFKELVKNGVNGPMLVYPLLRSRWDDRTSVVIPEEGEIFYIVALLRFVPPCAKVSSVEKMVAQNQEIVHWCVKNGIDYKLYLPHYKSQEEWIRHFGNRWSRFVDRKAMFDPMAILSPGQKIFNRSL</sequence>
<proteinExistence type="evidence at protein level"/>
<feature type="chain" id="PRO_0000128156" description="Cytokinin dehydrogenase 7">
    <location>
        <begin position="1"/>
        <end position="524"/>
    </location>
</feature>
<feature type="domain" description="FAD-binding PCMH-type" evidence="2">
    <location>
        <begin position="58"/>
        <end position="238"/>
    </location>
</feature>
<feature type="binding site" evidence="3 7 8">
    <location>
        <position position="91"/>
    </location>
    <ligand>
        <name>FAD</name>
        <dbReference type="ChEBI" id="CHEBI:57692"/>
    </ligand>
</feature>
<feature type="binding site" evidence="3 7 8">
    <location>
        <position position="93"/>
    </location>
    <ligand>
        <name>FAD</name>
        <dbReference type="ChEBI" id="CHEBI:57692"/>
    </ligand>
</feature>
<feature type="binding site" evidence="3 7 8">
    <location>
        <position position="94"/>
    </location>
    <ligand>
        <name>FAD</name>
        <dbReference type="ChEBI" id="CHEBI:57692"/>
    </ligand>
</feature>
<feature type="binding site" evidence="3 8">
    <location>
        <position position="95"/>
    </location>
    <ligand>
        <name>FAD</name>
        <dbReference type="ChEBI" id="CHEBI:57692"/>
    </ligand>
</feature>
<feature type="binding site" evidence="3 7 8">
    <location>
        <position position="97"/>
    </location>
    <ligand>
        <name>FAD</name>
        <dbReference type="ChEBI" id="CHEBI:57692"/>
    </ligand>
</feature>
<feature type="binding site" evidence="3 7">
    <location>
        <position position="101"/>
    </location>
    <ligand>
        <name>FAD</name>
        <dbReference type="ChEBI" id="CHEBI:57692"/>
    </ligand>
</feature>
<feature type="binding site" evidence="3 7 8">
    <location>
        <position position="162"/>
    </location>
    <ligand>
        <name>FAD</name>
        <dbReference type="ChEBI" id="CHEBI:57692"/>
    </ligand>
</feature>
<feature type="binding site" evidence="3 7 8">
    <location>
        <position position="167"/>
    </location>
    <ligand>
        <name>FAD</name>
        <dbReference type="ChEBI" id="CHEBI:57692"/>
    </ligand>
</feature>
<feature type="binding site" evidence="1">
    <location>
        <position position="173"/>
    </location>
    <ligand>
        <name>FAD</name>
        <dbReference type="ChEBI" id="CHEBI:57692"/>
    </ligand>
</feature>
<feature type="binding site" evidence="3 7 8">
    <location>
        <position position="177"/>
    </location>
    <ligand>
        <name>FAD</name>
        <dbReference type="ChEBI" id="CHEBI:57692"/>
    </ligand>
</feature>
<feature type="binding site" evidence="3 7 8">
    <location>
        <position position="228"/>
    </location>
    <ligand>
        <name>FAD</name>
        <dbReference type="ChEBI" id="CHEBI:57692"/>
    </ligand>
</feature>
<feature type="binding site" evidence="3 7 8">
    <location>
        <position position="479"/>
    </location>
    <ligand>
        <name>FAD</name>
        <dbReference type="ChEBI" id="CHEBI:57692"/>
    </ligand>
</feature>
<feature type="binding site" evidence="3 7 8">
    <location>
        <position position="514"/>
    </location>
    <ligand>
        <name>FAD</name>
        <dbReference type="ChEBI" id="CHEBI:57692"/>
    </ligand>
</feature>
<feature type="binding site" evidence="3 7 8">
    <location>
        <position position="517"/>
    </location>
    <ligand>
        <name>FAD</name>
        <dbReference type="ChEBI" id="CHEBI:57692"/>
    </ligand>
</feature>
<feature type="modified residue" description="Pros-8alpha-FAD histidine" evidence="3 7">
    <location>
        <position position="96"/>
    </location>
</feature>
<feature type="strand" evidence="9">
    <location>
        <begin position="37"/>
        <end position="41"/>
    </location>
</feature>
<feature type="helix" evidence="10">
    <location>
        <begin position="44"/>
        <end position="49"/>
    </location>
</feature>
<feature type="strand" evidence="10">
    <location>
        <begin position="63"/>
        <end position="66"/>
    </location>
</feature>
<feature type="helix" evidence="10">
    <location>
        <begin position="71"/>
        <end position="83"/>
    </location>
</feature>
<feature type="strand" evidence="10">
    <location>
        <begin position="84"/>
        <end position="86"/>
    </location>
</feature>
<feature type="strand" evidence="10">
    <location>
        <begin position="89"/>
        <end position="95"/>
    </location>
</feature>
<feature type="strand" evidence="9">
    <location>
        <begin position="98"/>
        <end position="100"/>
    </location>
</feature>
<feature type="strand" evidence="10">
    <location>
        <begin position="107"/>
        <end position="111"/>
    </location>
</feature>
<feature type="helix" evidence="10">
    <location>
        <begin position="112"/>
        <end position="118"/>
    </location>
</feature>
<feature type="strand" evidence="10">
    <location>
        <begin position="120"/>
        <end position="124"/>
    </location>
</feature>
<feature type="strand" evidence="10">
    <location>
        <begin position="127"/>
        <end position="130"/>
    </location>
</feature>
<feature type="strand" evidence="10">
    <location>
        <begin position="132"/>
        <end position="137"/>
    </location>
</feature>
<feature type="helix" evidence="10">
    <location>
        <begin position="142"/>
        <end position="153"/>
    </location>
</feature>
<feature type="strand" evidence="10">
    <location>
        <begin position="154"/>
        <end position="156"/>
    </location>
</feature>
<feature type="strand" evidence="10">
    <location>
        <begin position="165"/>
        <end position="167"/>
    </location>
</feature>
<feature type="helix" evidence="10">
    <location>
        <begin position="168"/>
        <end position="172"/>
    </location>
</feature>
<feature type="helix" evidence="10">
    <location>
        <begin position="181"/>
        <end position="184"/>
    </location>
</feature>
<feature type="helix" evidence="10">
    <location>
        <begin position="187"/>
        <end position="190"/>
    </location>
</feature>
<feature type="strand" evidence="10">
    <location>
        <begin position="191"/>
        <end position="198"/>
    </location>
</feature>
<feature type="strand" evidence="10">
    <location>
        <begin position="203"/>
        <end position="206"/>
    </location>
</feature>
<feature type="helix" evidence="10">
    <location>
        <begin position="212"/>
        <end position="218"/>
    </location>
</feature>
<feature type="strand" evidence="10">
    <location>
        <begin position="224"/>
        <end position="237"/>
    </location>
</feature>
<feature type="strand" evidence="10">
    <location>
        <begin position="240"/>
        <end position="250"/>
    </location>
</feature>
<feature type="helix" evidence="10">
    <location>
        <begin position="252"/>
        <end position="263"/>
    </location>
</feature>
<feature type="turn" evidence="10">
    <location>
        <begin position="267"/>
        <end position="269"/>
    </location>
</feature>
<feature type="strand" evidence="10">
    <location>
        <begin position="272"/>
        <end position="276"/>
    </location>
</feature>
<feature type="strand" evidence="10">
    <location>
        <begin position="279"/>
        <end position="282"/>
    </location>
</feature>
<feature type="turn" evidence="10">
    <location>
        <begin position="285"/>
        <end position="287"/>
    </location>
</feature>
<feature type="helix" evidence="10">
    <location>
        <begin position="289"/>
        <end position="291"/>
    </location>
</feature>
<feature type="helix" evidence="10">
    <location>
        <begin position="302"/>
        <end position="304"/>
    </location>
</feature>
<feature type="strand" evidence="10">
    <location>
        <begin position="311"/>
        <end position="322"/>
    </location>
</feature>
<feature type="helix" evidence="10">
    <location>
        <begin position="328"/>
        <end position="339"/>
    </location>
</feature>
<feature type="strand" evidence="10">
    <location>
        <begin position="349"/>
        <end position="355"/>
    </location>
</feature>
<feature type="helix" evidence="10">
    <location>
        <begin position="356"/>
        <end position="360"/>
    </location>
</feature>
<feature type="helix" evidence="10">
    <location>
        <begin position="363"/>
        <end position="373"/>
    </location>
</feature>
<feature type="strand" evidence="10">
    <location>
        <begin position="376"/>
        <end position="378"/>
    </location>
</feature>
<feature type="strand" evidence="10">
    <location>
        <begin position="383"/>
        <end position="388"/>
    </location>
</feature>
<feature type="helix" evidence="10">
    <location>
        <begin position="389"/>
        <end position="398"/>
    </location>
</feature>
<feature type="helix" evidence="10">
    <location>
        <begin position="399"/>
        <end position="403"/>
    </location>
</feature>
<feature type="turn" evidence="10">
    <location>
        <begin position="404"/>
        <end position="406"/>
    </location>
</feature>
<feature type="strand" evidence="10">
    <location>
        <begin position="412"/>
        <end position="418"/>
    </location>
</feature>
<feature type="helix" evidence="10">
    <location>
        <begin position="419"/>
        <end position="421"/>
    </location>
</feature>
<feature type="strand" evidence="10">
    <location>
        <begin position="435"/>
        <end position="442"/>
    </location>
</feature>
<feature type="helix" evidence="10">
    <location>
        <begin position="452"/>
        <end position="471"/>
    </location>
</feature>
<feature type="strand" evidence="10">
    <location>
        <begin position="476"/>
        <end position="480"/>
    </location>
</feature>
<feature type="helix" evidence="10">
    <location>
        <begin position="486"/>
        <end position="493"/>
    </location>
</feature>
<feature type="helix" evidence="10">
    <location>
        <begin position="494"/>
        <end position="496"/>
    </location>
</feature>
<feature type="helix" evidence="10">
    <location>
        <begin position="497"/>
        <end position="507"/>
    </location>
</feature>
<feature type="helix" evidence="10">
    <location>
        <begin position="515"/>
        <end position="517"/>
    </location>
</feature>
<organism>
    <name type="scientific">Arabidopsis thaliana</name>
    <name type="common">Mouse-ear cress</name>
    <dbReference type="NCBI Taxonomy" id="3702"/>
    <lineage>
        <taxon>Eukaryota</taxon>
        <taxon>Viridiplantae</taxon>
        <taxon>Streptophyta</taxon>
        <taxon>Embryophyta</taxon>
        <taxon>Tracheophyta</taxon>
        <taxon>Spermatophyta</taxon>
        <taxon>Magnoliopsida</taxon>
        <taxon>eudicotyledons</taxon>
        <taxon>Gunneridae</taxon>
        <taxon>Pentapetalae</taxon>
        <taxon>rosids</taxon>
        <taxon>malvids</taxon>
        <taxon>Brassicales</taxon>
        <taxon>Brassicaceae</taxon>
        <taxon>Camelineae</taxon>
        <taxon>Arabidopsis</taxon>
    </lineage>
</organism>
<gene>
    <name type="primary">CKX7</name>
    <name type="synonym">CKX5</name>
    <name type="ordered locus">At5g21482</name>
    <name type="ORF">F13M11</name>
</gene>
<dbReference type="EC" id="1.5.99.12" evidence="4"/>
<dbReference type="EMBL" id="AF303981">
    <property type="protein sequence ID" value="AAG30908.1"/>
    <property type="molecule type" value="mRNA"/>
</dbReference>
<dbReference type="EMBL" id="AC140977">
    <property type="protein sequence ID" value="AAO73882.1"/>
    <property type="molecule type" value="Genomic_DNA"/>
</dbReference>
<dbReference type="EMBL" id="CP002688">
    <property type="protein sequence ID" value="AED92951.1"/>
    <property type="molecule type" value="Genomic_DNA"/>
</dbReference>
<dbReference type="RefSeq" id="NP_850863.1">
    <property type="nucleotide sequence ID" value="NM_180532.3"/>
</dbReference>
<dbReference type="PDB" id="2EXR">
    <property type="method" value="X-ray"/>
    <property type="resolution" value="1.70 A"/>
    <property type="chains" value="A=2-524"/>
</dbReference>
<dbReference type="PDB" id="2Q4W">
    <property type="method" value="X-ray"/>
    <property type="resolution" value="1.70 A"/>
    <property type="chains" value="A=2-524"/>
</dbReference>
<dbReference type="PDBsum" id="2EXR"/>
<dbReference type="PDBsum" id="2Q4W"/>
<dbReference type="SMR" id="Q9FUJ1"/>
<dbReference type="STRING" id="3702.Q9FUJ1"/>
<dbReference type="PaxDb" id="3702-AT5G21482.1"/>
<dbReference type="ProteomicsDB" id="222095"/>
<dbReference type="DNASU" id="832248"/>
<dbReference type="EnsemblPlants" id="AT5G21482.1">
    <property type="protein sequence ID" value="AT5G21482.1"/>
    <property type="gene ID" value="AT5G21482"/>
</dbReference>
<dbReference type="GeneID" id="832248"/>
<dbReference type="Gramene" id="AT5G21482.1">
    <property type="protein sequence ID" value="AT5G21482.1"/>
    <property type="gene ID" value="AT5G21482"/>
</dbReference>
<dbReference type="KEGG" id="ath:AT5G21482"/>
<dbReference type="Araport" id="AT5G21482"/>
<dbReference type="TAIR" id="AT5G21482">
    <property type="gene designation" value="CKX7"/>
</dbReference>
<dbReference type="eggNOG" id="KOG1231">
    <property type="taxonomic scope" value="Eukaryota"/>
</dbReference>
<dbReference type="HOGENOM" id="CLU_024955_1_0_1"/>
<dbReference type="InParanoid" id="Q9FUJ1"/>
<dbReference type="OMA" id="DPCNGWP"/>
<dbReference type="PhylomeDB" id="Q9FUJ1"/>
<dbReference type="BioCyc" id="ARA:AT5G21482-MONOMER"/>
<dbReference type="BRENDA" id="1.5.99.12">
    <property type="organism ID" value="399"/>
</dbReference>
<dbReference type="EvolutionaryTrace" id="Q9FUJ1"/>
<dbReference type="PRO" id="PR:Q9FUJ1"/>
<dbReference type="Proteomes" id="UP000006548">
    <property type="component" value="Chromosome 5"/>
</dbReference>
<dbReference type="ExpressionAtlas" id="Q9FUJ1">
    <property type="expression patterns" value="baseline and differential"/>
</dbReference>
<dbReference type="GO" id="GO:0005829">
    <property type="term" value="C:cytosol"/>
    <property type="evidence" value="ECO:0007669"/>
    <property type="project" value="UniProtKB-SubCell"/>
</dbReference>
<dbReference type="GO" id="GO:0019139">
    <property type="term" value="F:cytokinin dehydrogenase activity"/>
    <property type="evidence" value="ECO:0000314"/>
    <property type="project" value="TAIR"/>
</dbReference>
<dbReference type="GO" id="GO:0071949">
    <property type="term" value="F:FAD binding"/>
    <property type="evidence" value="ECO:0007669"/>
    <property type="project" value="InterPro"/>
</dbReference>
<dbReference type="GO" id="GO:0009823">
    <property type="term" value="P:cytokinin catabolic process"/>
    <property type="evidence" value="ECO:0000314"/>
    <property type="project" value="TAIR"/>
</dbReference>
<dbReference type="FunFam" id="3.40.462.10:FF:000001">
    <property type="entry name" value="Cytokinin dehydrogenase 2"/>
    <property type="match status" value="1"/>
</dbReference>
<dbReference type="Gene3D" id="3.30.465.10">
    <property type="match status" value="1"/>
</dbReference>
<dbReference type="Gene3D" id="3.40.462.10">
    <property type="entry name" value="FAD-linked oxidases, C-terminal domain"/>
    <property type="match status" value="1"/>
</dbReference>
<dbReference type="Gene3D" id="3.30.43.10">
    <property type="entry name" value="Uridine Diphospho-n-acetylenolpyruvylglucosamine Reductase, domain 2"/>
    <property type="match status" value="1"/>
</dbReference>
<dbReference type="InterPro" id="IPR016170">
    <property type="entry name" value="Cytok_DH_C_sf"/>
</dbReference>
<dbReference type="InterPro" id="IPR015345">
    <property type="entry name" value="Cytokinin_DH_FAD/cytokin-bd"/>
</dbReference>
<dbReference type="InterPro" id="IPR016166">
    <property type="entry name" value="FAD-bd_PCMH"/>
</dbReference>
<dbReference type="InterPro" id="IPR036318">
    <property type="entry name" value="FAD-bd_PCMH-like_sf"/>
</dbReference>
<dbReference type="InterPro" id="IPR016167">
    <property type="entry name" value="FAD-bd_PCMH_sub1"/>
</dbReference>
<dbReference type="InterPro" id="IPR016169">
    <property type="entry name" value="FAD-bd_PCMH_sub2"/>
</dbReference>
<dbReference type="InterPro" id="IPR016164">
    <property type="entry name" value="FAD-linked_Oxase-like_C"/>
</dbReference>
<dbReference type="InterPro" id="IPR050432">
    <property type="entry name" value="FAD-linked_Oxidoreductases_BP"/>
</dbReference>
<dbReference type="InterPro" id="IPR006094">
    <property type="entry name" value="Oxid_FAD_bind_N"/>
</dbReference>
<dbReference type="PANTHER" id="PTHR13878:SF112">
    <property type="entry name" value="CYTOKININ DEHYDROGENASE 7"/>
    <property type="match status" value="1"/>
</dbReference>
<dbReference type="PANTHER" id="PTHR13878">
    <property type="entry name" value="GULONOLACTONE OXIDASE"/>
    <property type="match status" value="1"/>
</dbReference>
<dbReference type="Pfam" id="PF09265">
    <property type="entry name" value="Cytokin-bind"/>
    <property type="match status" value="1"/>
</dbReference>
<dbReference type="Pfam" id="PF01565">
    <property type="entry name" value="FAD_binding_4"/>
    <property type="match status" value="1"/>
</dbReference>
<dbReference type="SUPFAM" id="SSF56176">
    <property type="entry name" value="FAD-binding/transporter-associated domain-like"/>
    <property type="match status" value="1"/>
</dbReference>
<dbReference type="SUPFAM" id="SSF55103">
    <property type="entry name" value="FAD-linked oxidases, C-terminal domain"/>
    <property type="match status" value="1"/>
</dbReference>
<dbReference type="PROSITE" id="PS51387">
    <property type="entry name" value="FAD_PCMH"/>
    <property type="match status" value="1"/>
</dbReference>
<name>CKX7_ARATH</name>
<protein>
    <recommendedName>
        <fullName>Cytokinin dehydrogenase 7</fullName>
        <ecNumber evidence="4">1.5.99.12</ecNumber>
    </recommendedName>
    <alternativeName>
        <fullName>Cytokinin oxidase 7</fullName>
        <shortName>AtCKX5</shortName>
        <shortName>AtCKX7</shortName>
        <shortName>CKO7</shortName>
    </alternativeName>
</protein>
<reference key="1">
    <citation type="journal article" date="2001" name="Plant Physiol.">
        <title>Molecular and biochemical characterization of a cytokinin oxidase from maize.</title>
        <authorList>
            <person name="Bilyeu K.D."/>
            <person name="Cole J.L."/>
            <person name="Laskey J.G."/>
            <person name="Riekhof W.R."/>
            <person name="Esparza T.J."/>
            <person name="Kramer M.D."/>
            <person name="Morris R.O."/>
        </authorList>
    </citation>
    <scope>NUCLEOTIDE SEQUENCE [MRNA]</scope>
</reference>
<reference key="2">
    <citation type="journal article" date="2000" name="Nature">
        <title>Sequence and analysis of chromosome 5 of the plant Arabidopsis thaliana.</title>
        <authorList>
            <person name="Tabata S."/>
            <person name="Kaneko T."/>
            <person name="Nakamura Y."/>
            <person name="Kotani H."/>
            <person name="Kato T."/>
            <person name="Asamizu E."/>
            <person name="Miyajima N."/>
            <person name="Sasamoto S."/>
            <person name="Kimura T."/>
            <person name="Hosouchi T."/>
            <person name="Kawashima K."/>
            <person name="Kohara M."/>
            <person name="Matsumoto M."/>
            <person name="Matsuno A."/>
            <person name="Muraki A."/>
            <person name="Nakayama S."/>
            <person name="Nakazaki N."/>
            <person name="Naruo K."/>
            <person name="Okumura S."/>
            <person name="Shinpo S."/>
            <person name="Takeuchi C."/>
            <person name="Wada T."/>
            <person name="Watanabe A."/>
            <person name="Yamada M."/>
            <person name="Yasuda M."/>
            <person name="Sato S."/>
            <person name="de la Bastide M."/>
            <person name="Huang E."/>
            <person name="Spiegel L."/>
            <person name="Gnoj L."/>
            <person name="O'Shaughnessy A."/>
            <person name="Preston R."/>
            <person name="Habermann K."/>
            <person name="Murray J."/>
            <person name="Johnson D."/>
            <person name="Rohlfing T."/>
            <person name="Nelson J."/>
            <person name="Stoneking T."/>
            <person name="Pepin K."/>
            <person name="Spieth J."/>
            <person name="Sekhon M."/>
            <person name="Armstrong J."/>
            <person name="Becker M."/>
            <person name="Belter E."/>
            <person name="Cordum H."/>
            <person name="Cordes M."/>
            <person name="Courtney L."/>
            <person name="Courtney W."/>
            <person name="Dante M."/>
            <person name="Du H."/>
            <person name="Edwards J."/>
            <person name="Fryman J."/>
            <person name="Haakensen B."/>
            <person name="Lamar E."/>
            <person name="Latreille P."/>
            <person name="Leonard S."/>
            <person name="Meyer R."/>
            <person name="Mulvaney E."/>
            <person name="Ozersky P."/>
            <person name="Riley A."/>
            <person name="Strowmatt C."/>
            <person name="Wagner-McPherson C."/>
            <person name="Wollam A."/>
            <person name="Yoakum M."/>
            <person name="Bell M."/>
            <person name="Dedhia N."/>
            <person name="Parnell L."/>
            <person name="Shah R."/>
            <person name="Rodriguez M."/>
            <person name="Hoon See L."/>
            <person name="Vil D."/>
            <person name="Baker J."/>
            <person name="Kirchoff K."/>
            <person name="Toth K."/>
            <person name="King L."/>
            <person name="Bahret A."/>
            <person name="Miller B."/>
            <person name="Marra M.A."/>
            <person name="Martienssen R."/>
            <person name="McCombie W.R."/>
            <person name="Wilson R.K."/>
            <person name="Murphy G."/>
            <person name="Bancroft I."/>
            <person name="Volckaert G."/>
            <person name="Wambutt R."/>
            <person name="Duesterhoeft A."/>
            <person name="Stiekema W."/>
            <person name="Pohl T."/>
            <person name="Entian K.-D."/>
            <person name="Terryn N."/>
            <person name="Hartley N."/>
            <person name="Bent E."/>
            <person name="Johnson S."/>
            <person name="Langham S.-A."/>
            <person name="McCullagh B."/>
            <person name="Robben J."/>
            <person name="Grymonprez B."/>
            <person name="Zimmermann W."/>
            <person name="Ramsperger U."/>
            <person name="Wedler H."/>
            <person name="Balke K."/>
            <person name="Wedler E."/>
            <person name="Peters S."/>
            <person name="van Staveren M."/>
            <person name="Dirkse W."/>
            <person name="Mooijman P."/>
            <person name="Klein Lankhorst R."/>
            <person name="Weitzenegger T."/>
            <person name="Bothe G."/>
            <person name="Rose M."/>
            <person name="Hauf J."/>
            <person name="Berneiser S."/>
            <person name="Hempel S."/>
            <person name="Feldpausch M."/>
            <person name="Lamberth S."/>
            <person name="Villarroel R."/>
            <person name="Gielen J."/>
            <person name="Ardiles W."/>
            <person name="Bents O."/>
            <person name="Lemcke K."/>
            <person name="Kolesov G."/>
            <person name="Mayer K.F.X."/>
            <person name="Rudd S."/>
            <person name="Schoof H."/>
            <person name="Schueller C."/>
            <person name="Zaccaria P."/>
            <person name="Mewes H.-W."/>
            <person name="Bevan M."/>
            <person name="Fransz P.F."/>
        </authorList>
    </citation>
    <scope>NUCLEOTIDE SEQUENCE [LARGE SCALE GENOMIC DNA]</scope>
    <source>
        <strain>cv. Columbia</strain>
    </source>
</reference>
<reference key="3">
    <citation type="journal article" date="2017" name="Plant J.">
        <title>Araport11: a complete reannotation of the Arabidopsis thaliana reference genome.</title>
        <authorList>
            <person name="Cheng C.Y."/>
            <person name="Krishnakumar V."/>
            <person name="Chan A.P."/>
            <person name="Thibaud-Nissen F."/>
            <person name="Schobel S."/>
            <person name="Town C.D."/>
        </authorList>
    </citation>
    <scope>GENOME REANNOTATION</scope>
    <source>
        <strain>cv. Columbia</strain>
    </source>
</reference>
<reference key="4">
    <citation type="journal article" date="2003" name="J. Plant Res.">
        <title>Structure and function of cytokinin oxidase/dehydrogenase genes of maize, rice, Arabidopsis and other species.</title>
        <authorList>
            <person name="Schmuelling T."/>
            <person name="Werner T."/>
            <person name="Riefler M."/>
            <person name="Krupkova E."/>
            <person name="Bartrina y Manns I."/>
        </authorList>
    </citation>
    <scope>REVIEW</scope>
    <scope>NOMENCLATURE</scope>
</reference>
<reference key="5">
    <citation type="journal article" date="2010" name="Phytochemistry">
        <title>Vacuolar and cytosolic cytokinin dehydrogenases of Arabidopsis thaliana: heterologous expression, purification and properties.</title>
        <authorList>
            <person name="Kowalska M."/>
            <person name="Galuszka P."/>
            <person name="Frebortova J."/>
            <person name="Sebela M."/>
            <person name="Beres T."/>
            <person name="Hluska T."/>
            <person name="Smehilova M."/>
            <person name="Bilyeu K.D."/>
            <person name="Frebort I."/>
        </authorList>
    </citation>
    <scope>FUNCTION</scope>
    <scope>CATALYTIC ACTIVITY</scope>
</reference>
<reference key="6">
    <citation type="journal article" date="2014" name="Plant J.">
        <title>Overexpression of the cytosolic cytokinin oxidase/dehydrogenase (CKX7) from Arabidopsis causes specific changes in root growth and xylem differentiation.</title>
        <authorList>
            <person name="Koellmer I."/>
            <person name="Novak O."/>
            <person name="Strnad M."/>
            <person name="Schmuelling T."/>
            <person name="Werner T."/>
        </authorList>
    </citation>
    <scope>FUNCTION</scope>
    <scope>SUBCELLULAR LOCATION</scope>
    <scope>TISSUE SPECIFICITY</scope>
</reference>
<reference key="7">
    <citation type="journal article" date="2008" name="Proteins">
        <title>Crystal structure of Arabidopsis thaliana cytokinin dehydrogenase.</title>
        <authorList>
            <person name="Bae E."/>
            <person name="Bingman C.A."/>
            <person name="Bitto E."/>
            <person name="Aceti D.J."/>
            <person name="Phillips G.N."/>
        </authorList>
    </citation>
    <scope>X-RAY CRYSTALLOGRAPHY (1.70 ANGSTROMS) OF 2-524 IN COMPLEX WITH FAD</scope>
    <scope>COFACTOR</scope>
</reference>